<reference key="1">
    <citation type="journal article" date="2003" name="Proc. Natl. Acad. Sci. U.S.A.">
        <title>The complete genome sequence of Chromobacterium violaceum reveals remarkable and exploitable bacterial adaptability.</title>
        <authorList>
            <person name="Vasconcelos A.T.R."/>
            <person name="de Almeida D.F."/>
            <person name="Hungria M."/>
            <person name="Guimaraes C.T."/>
            <person name="Antonio R.V."/>
            <person name="Almeida F.C."/>
            <person name="de Almeida L.G.P."/>
            <person name="de Almeida R."/>
            <person name="Alves-Gomes J.A."/>
            <person name="Andrade E.M."/>
            <person name="Araripe J."/>
            <person name="de Araujo M.F.F."/>
            <person name="Astolfi-Filho S."/>
            <person name="Azevedo V."/>
            <person name="Baptista A.J."/>
            <person name="Bataus L.A.M."/>
            <person name="Batista J.S."/>
            <person name="Belo A."/>
            <person name="van den Berg C."/>
            <person name="Bogo M."/>
            <person name="Bonatto S."/>
            <person name="Bordignon J."/>
            <person name="Brigido M.M."/>
            <person name="Brito C.A."/>
            <person name="Brocchi M."/>
            <person name="Burity H.A."/>
            <person name="Camargo A.A."/>
            <person name="Cardoso D.D.P."/>
            <person name="Carneiro N.P."/>
            <person name="Carraro D.M."/>
            <person name="Carvalho C.M.B."/>
            <person name="Cascardo J.C.M."/>
            <person name="Cavada B.S."/>
            <person name="Chueire L.M.O."/>
            <person name="Creczynski-Pasa T.B."/>
            <person name="Cunha-Junior N.C."/>
            <person name="Fagundes N."/>
            <person name="Falcao C.L."/>
            <person name="Fantinatti F."/>
            <person name="Farias I.P."/>
            <person name="Felipe M.S.S."/>
            <person name="Ferrari L.P."/>
            <person name="Ferro J.A."/>
            <person name="Ferro M.I.T."/>
            <person name="Franco G.R."/>
            <person name="Freitas N.S.A."/>
            <person name="Furlan L.R."/>
            <person name="Gazzinelli R.T."/>
            <person name="Gomes E.A."/>
            <person name="Goncalves P.R."/>
            <person name="Grangeiro T.B."/>
            <person name="Grattapaglia D."/>
            <person name="Grisard E.C."/>
            <person name="Hanna E.S."/>
            <person name="Jardim S.N."/>
            <person name="Laurino J."/>
            <person name="Leoi L.C.T."/>
            <person name="Lima L.F.A."/>
            <person name="Loureiro M.F."/>
            <person name="Lyra M.C.C.P."/>
            <person name="Madeira H.M.F."/>
            <person name="Manfio G.P."/>
            <person name="Maranhao A.Q."/>
            <person name="Martins W.S."/>
            <person name="di Mauro S.M.Z."/>
            <person name="de Medeiros S.R.B."/>
            <person name="Meissner R.V."/>
            <person name="Moreira M.A.M."/>
            <person name="Nascimento F.F."/>
            <person name="Nicolas M.F."/>
            <person name="Oliveira J.G."/>
            <person name="Oliveira S.C."/>
            <person name="Paixao R.F.C."/>
            <person name="Parente J.A."/>
            <person name="Pedrosa F.O."/>
            <person name="Pena S.D.J."/>
            <person name="Pereira J.O."/>
            <person name="Pereira M."/>
            <person name="Pinto L.S.R.C."/>
            <person name="Pinto L.S."/>
            <person name="Porto J.I.R."/>
            <person name="Potrich D.P."/>
            <person name="Ramalho-Neto C.E."/>
            <person name="Reis A.M.M."/>
            <person name="Rigo L.U."/>
            <person name="Rondinelli E."/>
            <person name="Santos E.B.P."/>
            <person name="Santos F.R."/>
            <person name="Schneider M.P.C."/>
            <person name="Seuanez H.N."/>
            <person name="Silva A.M.R."/>
            <person name="da Silva A.L.C."/>
            <person name="Silva D.W."/>
            <person name="Silva R."/>
            <person name="Simoes I.C."/>
            <person name="Simon D."/>
            <person name="Soares C.M.A."/>
            <person name="Soares R.B.A."/>
            <person name="Souza E.M."/>
            <person name="Souza K.R.L."/>
            <person name="Souza R.C."/>
            <person name="Steffens M.B.R."/>
            <person name="Steindel M."/>
            <person name="Teixeira S.R."/>
            <person name="Urmenyi T."/>
            <person name="Vettore A."/>
            <person name="Wassem R."/>
            <person name="Zaha A."/>
            <person name="Simpson A.J.G."/>
        </authorList>
    </citation>
    <scope>NUCLEOTIDE SEQUENCE [LARGE SCALE GENOMIC DNA]</scope>
    <source>
        <strain>ATCC 12472 / DSM 30191 / JCM 1249 / CCUG 213 / NBRC 12614 / NCIMB 9131 / NCTC 9757 / MK</strain>
    </source>
</reference>
<feature type="chain" id="PRO_0000303325" description="tRNA N6-adenosine threonylcarbamoyltransferase">
    <location>
        <begin position="1"/>
        <end position="341"/>
    </location>
</feature>
<feature type="binding site" evidence="1">
    <location>
        <position position="111"/>
    </location>
    <ligand>
        <name>Fe cation</name>
        <dbReference type="ChEBI" id="CHEBI:24875"/>
    </ligand>
</feature>
<feature type="binding site" evidence="1">
    <location>
        <position position="115"/>
    </location>
    <ligand>
        <name>Fe cation</name>
        <dbReference type="ChEBI" id="CHEBI:24875"/>
    </ligand>
</feature>
<feature type="binding site" evidence="1">
    <location>
        <begin position="134"/>
        <end position="138"/>
    </location>
    <ligand>
        <name>substrate</name>
    </ligand>
</feature>
<feature type="binding site" evidence="1">
    <location>
        <position position="167"/>
    </location>
    <ligand>
        <name>substrate</name>
    </ligand>
</feature>
<feature type="binding site" evidence="1">
    <location>
        <position position="180"/>
    </location>
    <ligand>
        <name>substrate</name>
    </ligand>
</feature>
<feature type="binding site" evidence="1">
    <location>
        <position position="277"/>
    </location>
    <ligand>
        <name>substrate</name>
    </ligand>
</feature>
<feature type="binding site" evidence="1">
    <location>
        <position position="305"/>
    </location>
    <ligand>
        <name>Fe cation</name>
        <dbReference type="ChEBI" id="CHEBI:24875"/>
    </ligand>
</feature>
<keyword id="KW-0012">Acyltransferase</keyword>
<keyword id="KW-0963">Cytoplasm</keyword>
<keyword id="KW-0408">Iron</keyword>
<keyword id="KW-0479">Metal-binding</keyword>
<keyword id="KW-1185">Reference proteome</keyword>
<keyword id="KW-0808">Transferase</keyword>
<keyword id="KW-0819">tRNA processing</keyword>
<evidence type="ECO:0000255" key="1">
    <source>
        <dbReference type="HAMAP-Rule" id="MF_01445"/>
    </source>
</evidence>
<gene>
    <name evidence="1" type="primary">tsaD</name>
    <name type="synonym">gcp</name>
    <name type="ordered locus">CV_2757</name>
</gene>
<proteinExistence type="inferred from homology"/>
<comment type="function">
    <text evidence="1">Required for the formation of a threonylcarbamoyl group on adenosine at position 37 (t(6)A37) in tRNAs that read codons beginning with adenine. Is involved in the transfer of the threonylcarbamoyl moiety of threonylcarbamoyl-AMP (TC-AMP) to the N6 group of A37, together with TsaE and TsaB. TsaD likely plays a direct catalytic role in this reaction.</text>
</comment>
<comment type="catalytic activity">
    <reaction evidence="1">
        <text>L-threonylcarbamoyladenylate + adenosine(37) in tRNA = N(6)-L-threonylcarbamoyladenosine(37) in tRNA + AMP + H(+)</text>
        <dbReference type="Rhea" id="RHEA:37059"/>
        <dbReference type="Rhea" id="RHEA-COMP:10162"/>
        <dbReference type="Rhea" id="RHEA-COMP:10163"/>
        <dbReference type="ChEBI" id="CHEBI:15378"/>
        <dbReference type="ChEBI" id="CHEBI:73682"/>
        <dbReference type="ChEBI" id="CHEBI:74411"/>
        <dbReference type="ChEBI" id="CHEBI:74418"/>
        <dbReference type="ChEBI" id="CHEBI:456215"/>
        <dbReference type="EC" id="2.3.1.234"/>
    </reaction>
</comment>
<comment type="cofactor">
    <cofactor evidence="1">
        <name>Fe(2+)</name>
        <dbReference type="ChEBI" id="CHEBI:29033"/>
    </cofactor>
    <text evidence="1">Binds 1 Fe(2+) ion per subunit.</text>
</comment>
<comment type="subcellular location">
    <subcellularLocation>
        <location evidence="1">Cytoplasm</location>
    </subcellularLocation>
</comment>
<comment type="similarity">
    <text evidence="1">Belongs to the KAE1 / TsaD family.</text>
</comment>
<accession>Q7NUE3</accession>
<name>TSAD_CHRVO</name>
<dbReference type="EC" id="2.3.1.234" evidence="1"/>
<dbReference type="EMBL" id="AE016825">
    <property type="protein sequence ID" value="AAQ60425.1"/>
    <property type="molecule type" value="Genomic_DNA"/>
</dbReference>
<dbReference type="RefSeq" id="WP_011136304.1">
    <property type="nucleotide sequence ID" value="NC_005085.1"/>
</dbReference>
<dbReference type="SMR" id="Q7NUE3"/>
<dbReference type="STRING" id="243365.CV_2757"/>
<dbReference type="KEGG" id="cvi:CV_2757"/>
<dbReference type="eggNOG" id="COG0533">
    <property type="taxonomic scope" value="Bacteria"/>
</dbReference>
<dbReference type="HOGENOM" id="CLU_023208_0_0_4"/>
<dbReference type="OrthoDB" id="9806197at2"/>
<dbReference type="Proteomes" id="UP000001424">
    <property type="component" value="Chromosome"/>
</dbReference>
<dbReference type="GO" id="GO:0005737">
    <property type="term" value="C:cytoplasm"/>
    <property type="evidence" value="ECO:0007669"/>
    <property type="project" value="UniProtKB-SubCell"/>
</dbReference>
<dbReference type="GO" id="GO:0005506">
    <property type="term" value="F:iron ion binding"/>
    <property type="evidence" value="ECO:0007669"/>
    <property type="project" value="UniProtKB-UniRule"/>
</dbReference>
<dbReference type="GO" id="GO:0061711">
    <property type="term" value="F:N(6)-L-threonylcarbamoyladenine synthase activity"/>
    <property type="evidence" value="ECO:0007669"/>
    <property type="project" value="UniProtKB-EC"/>
</dbReference>
<dbReference type="GO" id="GO:0002949">
    <property type="term" value="P:tRNA threonylcarbamoyladenosine modification"/>
    <property type="evidence" value="ECO:0007669"/>
    <property type="project" value="UniProtKB-UniRule"/>
</dbReference>
<dbReference type="CDD" id="cd24133">
    <property type="entry name" value="ASKHA_NBD_TsaD_bac"/>
    <property type="match status" value="1"/>
</dbReference>
<dbReference type="FunFam" id="3.30.420.40:FF:000040">
    <property type="entry name" value="tRNA N6-adenosine threonylcarbamoyltransferase"/>
    <property type="match status" value="1"/>
</dbReference>
<dbReference type="Gene3D" id="3.30.420.40">
    <property type="match status" value="2"/>
</dbReference>
<dbReference type="HAMAP" id="MF_01445">
    <property type="entry name" value="TsaD"/>
    <property type="match status" value="1"/>
</dbReference>
<dbReference type="InterPro" id="IPR043129">
    <property type="entry name" value="ATPase_NBD"/>
</dbReference>
<dbReference type="InterPro" id="IPR000905">
    <property type="entry name" value="Gcp-like_dom"/>
</dbReference>
<dbReference type="InterPro" id="IPR017861">
    <property type="entry name" value="KAE1/TsaD"/>
</dbReference>
<dbReference type="InterPro" id="IPR022450">
    <property type="entry name" value="TsaD"/>
</dbReference>
<dbReference type="NCBIfam" id="TIGR00329">
    <property type="entry name" value="gcp_kae1"/>
    <property type="match status" value="1"/>
</dbReference>
<dbReference type="NCBIfam" id="TIGR03723">
    <property type="entry name" value="T6A_TsaD_YgjD"/>
    <property type="match status" value="1"/>
</dbReference>
<dbReference type="PANTHER" id="PTHR11735">
    <property type="entry name" value="TRNA N6-ADENOSINE THREONYLCARBAMOYLTRANSFERASE"/>
    <property type="match status" value="1"/>
</dbReference>
<dbReference type="PANTHER" id="PTHR11735:SF6">
    <property type="entry name" value="TRNA N6-ADENOSINE THREONYLCARBAMOYLTRANSFERASE, MITOCHONDRIAL"/>
    <property type="match status" value="1"/>
</dbReference>
<dbReference type="Pfam" id="PF00814">
    <property type="entry name" value="TsaD"/>
    <property type="match status" value="1"/>
</dbReference>
<dbReference type="PRINTS" id="PR00789">
    <property type="entry name" value="OSIALOPTASE"/>
</dbReference>
<dbReference type="SUPFAM" id="SSF53067">
    <property type="entry name" value="Actin-like ATPase domain"/>
    <property type="match status" value="2"/>
</dbReference>
<sequence>MLVLGIESSCDETGVALYDTERGLLAHQLHTQMAMHAEYGGVVPELASRDHIRRAIPLTEACLSEAGKKLADLDAIAYTQGPGLGGALMVGASMANALAFGLNIPVIPVHHLEGHLLSPLLADPKPEFPFLALLVSGGHTQLMAVRGVGDYEILGETVDDAAGEAFDKTAKLLGLPYPGGPLLSRLAESGSPDRFTLPRPMLHSGNLDMSFSGLKTAVLTLVRQQESAQGELDEQTRMDICRAFQEAIVEVLVKKSLAAMRQAGMKRLVVAGGVGANKQLRAALNDAAARKRFDVFYPPLALCTDNGAMIAFAGAMRLKFAEPAGGFTIKPRWDLSSLPAV</sequence>
<protein>
    <recommendedName>
        <fullName evidence="1">tRNA N6-adenosine threonylcarbamoyltransferase</fullName>
        <ecNumber evidence="1">2.3.1.234</ecNumber>
    </recommendedName>
    <alternativeName>
        <fullName evidence="1">N6-L-threonylcarbamoyladenine synthase</fullName>
        <shortName evidence="1">t(6)A synthase</shortName>
    </alternativeName>
    <alternativeName>
        <fullName evidence="1">t(6)A37 threonylcarbamoyladenosine biosynthesis protein TsaD</fullName>
    </alternativeName>
    <alternativeName>
        <fullName evidence="1">tRNA threonylcarbamoyladenosine biosynthesis protein TsaD</fullName>
    </alternativeName>
</protein>
<organism>
    <name type="scientific">Chromobacterium violaceum (strain ATCC 12472 / DSM 30191 / JCM 1249 / CCUG 213 / NBRC 12614 / NCIMB 9131 / NCTC 9757 / MK)</name>
    <dbReference type="NCBI Taxonomy" id="243365"/>
    <lineage>
        <taxon>Bacteria</taxon>
        <taxon>Pseudomonadati</taxon>
        <taxon>Pseudomonadota</taxon>
        <taxon>Betaproteobacteria</taxon>
        <taxon>Neisseriales</taxon>
        <taxon>Chromobacteriaceae</taxon>
        <taxon>Chromobacterium</taxon>
    </lineage>
</organism>